<organism>
    <name type="scientific">Rhyparobia maderae</name>
    <name type="common">Madeira cockroach</name>
    <name type="synonym">Leucophaea maderae</name>
    <dbReference type="NCBI Taxonomy" id="36963"/>
    <lineage>
        <taxon>Eukaryota</taxon>
        <taxon>Metazoa</taxon>
        <taxon>Ecdysozoa</taxon>
        <taxon>Arthropoda</taxon>
        <taxon>Hexapoda</taxon>
        <taxon>Insecta</taxon>
        <taxon>Pterygota</taxon>
        <taxon>Neoptera</taxon>
        <taxon>Polyneoptera</taxon>
        <taxon>Dictyoptera</taxon>
        <taxon>Blattodea</taxon>
        <taxon>Blaberoidea</taxon>
        <taxon>Blaberidae</taxon>
        <taxon>Oxyhaloinae</taxon>
        <taxon>Rhyparobia</taxon>
    </lineage>
</organism>
<accession>P81735</accession>
<keyword id="KW-0027">Amidation</keyword>
<keyword id="KW-0903">Direct protein sequencing</keyword>
<keyword id="KW-0527">Neuropeptide</keyword>
<keyword id="KW-0964">Secreted</keyword>
<proteinExistence type="evidence at protein level"/>
<reference key="1">
    <citation type="journal article" date="1996" name="Regul. Pept.">
        <title>Isolation of five tachykinin-related peptides from the midgut of the cockroach Leucophaea maderae: existence of N-terminally extended isoforms.</title>
        <authorList>
            <person name="Muren J.E."/>
            <person name="Naessel D.R."/>
        </authorList>
    </citation>
    <scope>PROTEIN SEQUENCE</scope>
    <scope>AMIDATION AT ARG-19</scope>
    <source>
        <tissue>Midgut</tissue>
    </source>
</reference>
<dbReference type="GO" id="GO:0005576">
    <property type="term" value="C:extracellular region"/>
    <property type="evidence" value="ECO:0007669"/>
    <property type="project" value="UniProtKB-SubCell"/>
</dbReference>
<dbReference type="GO" id="GO:0007218">
    <property type="term" value="P:neuropeptide signaling pathway"/>
    <property type="evidence" value="ECO:0007669"/>
    <property type="project" value="UniProtKB-KW"/>
</dbReference>
<protein>
    <recommendedName>
        <fullName>Tachykinin-related peptide 3</fullName>
        <shortName>LemTRP 3</shortName>
    </recommendedName>
</protein>
<comment type="function">
    <text>Myoactive peptide. Increases the amplitude and frequency of spontaneous contractions and tonus of hindgut muscle.</text>
</comment>
<comment type="subcellular location">
    <subcellularLocation>
        <location>Secreted</location>
    </subcellularLocation>
</comment>
<comment type="tissue specificity">
    <text>Midgut.</text>
</comment>
<sequence length="19" mass="1930">NGERAPGSKKAPSGFLGTR</sequence>
<evidence type="ECO:0000269" key="1">
    <source>
    </source>
</evidence>
<name>TRP3_RHYMA</name>
<feature type="peptide" id="PRO_0000044438" description="Tachykinin-related peptide 3">
    <location>
        <begin position="1"/>
        <end position="19"/>
    </location>
</feature>
<feature type="modified residue" description="Arginine amide" evidence="1">
    <location>
        <position position="19"/>
    </location>
</feature>